<protein>
    <recommendedName>
        <fullName evidence="1">Acyl-[acyl-carrier-protein]--UDP-N-acetylglucosamine O-acyltransferase</fullName>
        <shortName evidence="1">UDP-N-acetylglucosamine acyltransferase</shortName>
        <ecNumber evidence="1">2.3.1.129</ecNumber>
    </recommendedName>
</protein>
<name>LPXA_NAUPA</name>
<accession>B9L772</accession>
<proteinExistence type="inferred from homology"/>
<sequence length="259" mass="28261">MENISEKAIIKGKIGKNCKIGEGVIIDENVVIGDNNIIDPYTIITGYTTIGDNNHIYSHAVLGSEPQDLKYHGEKTELIIGNNNKIREFTLINPGTEGGGAVTKIGDNNLLMGYVHVAHDVIIANNCILANAATLAGHVELEDYVVIGGMTPVHQFVKIGAHAMIGGASAVAQDIPPFTIAEGNRAKLRGLNLTGLRRRFQNRSDIDAIKKAYKELFESGKPLKDTAKEILESTDNEYVKHLCEFVLNSKRGIPYDRKV</sequence>
<gene>
    <name evidence="1" type="primary">lpxA</name>
    <name type="ordered locus">NAMH_0038</name>
</gene>
<evidence type="ECO:0000255" key="1">
    <source>
        <dbReference type="HAMAP-Rule" id="MF_00387"/>
    </source>
</evidence>
<comment type="function">
    <text evidence="1">Involved in the biosynthesis of lipid A, a phosphorylated glycolipid that anchors the lipopolysaccharide to the outer membrane of the cell.</text>
</comment>
<comment type="catalytic activity">
    <reaction evidence="1">
        <text>a (3R)-hydroxyacyl-[ACP] + UDP-N-acetyl-alpha-D-glucosamine = a UDP-3-O-[(3R)-3-hydroxyacyl]-N-acetyl-alpha-D-glucosamine + holo-[ACP]</text>
        <dbReference type="Rhea" id="RHEA:67812"/>
        <dbReference type="Rhea" id="RHEA-COMP:9685"/>
        <dbReference type="Rhea" id="RHEA-COMP:9945"/>
        <dbReference type="ChEBI" id="CHEBI:57705"/>
        <dbReference type="ChEBI" id="CHEBI:64479"/>
        <dbReference type="ChEBI" id="CHEBI:78827"/>
        <dbReference type="ChEBI" id="CHEBI:173225"/>
        <dbReference type="EC" id="2.3.1.129"/>
    </reaction>
</comment>
<comment type="pathway">
    <text evidence="1">Glycolipid biosynthesis; lipid IV(A) biosynthesis; lipid IV(A) from (3R)-3-hydroxytetradecanoyl-[acyl-carrier-protein] and UDP-N-acetyl-alpha-D-glucosamine: step 1/6.</text>
</comment>
<comment type="subunit">
    <text evidence="1">Homotrimer.</text>
</comment>
<comment type="subcellular location">
    <subcellularLocation>
        <location evidence="1">Cytoplasm</location>
    </subcellularLocation>
</comment>
<comment type="similarity">
    <text evidence="1">Belongs to the transferase hexapeptide repeat family. LpxA subfamily.</text>
</comment>
<reference key="1">
    <citation type="journal article" date="2009" name="PLoS Genet.">
        <title>Adaptations to submarine hydrothermal environments exemplified by the genome of Nautilia profundicola.</title>
        <authorList>
            <person name="Campbell B.J."/>
            <person name="Smith J.L."/>
            <person name="Hanson T.E."/>
            <person name="Klotz M.G."/>
            <person name="Stein L.Y."/>
            <person name="Lee C.K."/>
            <person name="Wu D."/>
            <person name="Robinson J.M."/>
            <person name="Khouri H.M."/>
            <person name="Eisen J.A."/>
            <person name="Cary S.C."/>
        </authorList>
    </citation>
    <scope>NUCLEOTIDE SEQUENCE [LARGE SCALE GENOMIC DNA]</scope>
    <source>
        <strain>ATCC BAA-1463 / DSM 18972 / AmH</strain>
    </source>
</reference>
<dbReference type="EC" id="2.3.1.129" evidence="1"/>
<dbReference type="EMBL" id="CP001279">
    <property type="protein sequence ID" value="ACM93764.1"/>
    <property type="molecule type" value="Genomic_DNA"/>
</dbReference>
<dbReference type="RefSeq" id="WP_015902816.1">
    <property type="nucleotide sequence ID" value="NC_012115.1"/>
</dbReference>
<dbReference type="SMR" id="B9L772"/>
<dbReference type="STRING" id="598659.NAMH_0038"/>
<dbReference type="KEGG" id="nam:NAMH_0038"/>
<dbReference type="eggNOG" id="COG1043">
    <property type="taxonomic scope" value="Bacteria"/>
</dbReference>
<dbReference type="HOGENOM" id="CLU_061249_0_0_7"/>
<dbReference type="OrthoDB" id="9807278at2"/>
<dbReference type="UniPathway" id="UPA00359">
    <property type="reaction ID" value="UER00477"/>
</dbReference>
<dbReference type="Proteomes" id="UP000000448">
    <property type="component" value="Chromosome"/>
</dbReference>
<dbReference type="GO" id="GO:0005737">
    <property type="term" value="C:cytoplasm"/>
    <property type="evidence" value="ECO:0007669"/>
    <property type="project" value="UniProtKB-SubCell"/>
</dbReference>
<dbReference type="GO" id="GO:0016020">
    <property type="term" value="C:membrane"/>
    <property type="evidence" value="ECO:0007669"/>
    <property type="project" value="GOC"/>
</dbReference>
<dbReference type="GO" id="GO:0008780">
    <property type="term" value="F:acyl-[acyl-carrier-protein]-UDP-N-acetylglucosamine O-acyltransferase activity"/>
    <property type="evidence" value="ECO:0007669"/>
    <property type="project" value="UniProtKB-UniRule"/>
</dbReference>
<dbReference type="GO" id="GO:0009245">
    <property type="term" value="P:lipid A biosynthetic process"/>
    <property type="evidence" value="ECO:0007669"/>
    <property type="project" value="UniProtKB-UniRule"/>
</dbReference>
<dbReference type="CDD" id="cd03351">
    <property type="entry name" value="LbH_UDP-GlcNAc_AT"/>
    <property type="match status" value="1"/>
</dbReference>
<dbReference type="Gene3D" id="2.160.10.10">
    <property type="entry name" value="Hexapeptide repeat proteins"/>
    <property type="match status" value="1"/>
</dbReference>
<dbReference type="Gene3D" id="1.20.1180.10">
    <property type="entry name" value="Udp N-acetylglucosamine O-acyltransferase, C-terminal domain"/>
    <property type="match status" value="1"/>
</dbReference>
<dbReference type="HAMAP" id="MF_00387">
    <property type="entry name" value="LpxA"/>
    <property type="match status" value="1"/>
</dbReference>
<dbReference type="InterPro" id="IPR029098">
    <property type="entry name" value="Acetyltransf_C"/>
</dbReference>
<dbReference type="InterPro" id="IPR037157">
    <property type="entry name" value="Acetyltransf_C_sf"/>
</dbReference>
<dbReference type="InterPro" id="IPR001451">
    <property type="entry name" value="Hexapep"/>
</dbReference>
<dbReference type="InterPro" id="IPR018357">
    <property type="entry name" value="Hexapep_transf_CS"/>
</dbReference>
<dbReference type="InterPro" id="IPR010137">
    <property type="entry name" value="Lipid_A_LpxA"/>
</dbReference>
<dbReference type="InterPro" id="IPR011004">
    <property type="entry name" value="Trimer_LpxA-like_sf"/>
</dbReference>
<dbReference type="NCBIfam" id="TIGR01852">
    <property type="entry name" value="lipid_A_lpxA"/>
    <property type="match status" value="1"/>
</dbReference>
<dbReference type="NCBIfam" id="NF003657">
    <property type="entry name" value="PRK05289.1"/>
    <property type="match status" value="1"/>
</dbReference>
<dbReference type="PANTHER" id="PTHR43480">
    <property type="entry name" value="ACYL-[ACYL-CARRIER-PROTEIN]--UDP-N-ACETYLGLUCOSAMINE O-ACYLTRANSFERASE"/>
    <property type="match status" value="1"/>
</dbReference>
<dbReference type="PANTHER" id="PTHR43480:SF1">
    <property type="entry name" value="ACYL-[ACYL-CARRIER-PROTEIN]--UDP-N-ACETYLGLUCOSAMINE O-ACYLTRANSFERASE, MITOCHONDRIAL-RELATED"/>
    <property type="match status" value="1"/>
</dbReference>
<dbReference type="Pfam" id="PF13720">
    <property type="entry name" value="Acetyltransf_11"/>
    <property type="match status" value="1"/>
</dbReference>
<dbReference type="Pfam" id="PF00132">
    <property type="entry name" value="Hexapep"/>
    <property type="match status" value="2"/>
</dbReference>
<dbReference type="PIRSF" id="PIRSF000456">
    <property type="entry name" value="UDP-GlcNAc_acltr"/>
    <property type="match status" value="1"/>
</dbReference>
<dbReference type="SUPFAM" id="SSF51161">
    <property type="entry name" value="Trimeric LpxA-like enzymes"/>
    <property type="match status" value="1"/>
</dbReference>
<dbReference type="PROSITE" id="PS00101">
    <property type="entry name" value="HEXAPEP_TRANSFERASES"/>
    <property type="match status" value="3"/>
</dbReference>
<organism>
    <name type="scientific">Nautilia profundicola (strain ATCC BAA-1463 / DSM 18972 / AmH)</name>
    <dbReference type="NCBI Taxonomy" id="598659"/>
    <lineage>
        <taxon>Bacteria</taxon>
        <taxon>Pseudomonadati</taxon>
        <taxon>Campylobacterota</taxon>
        <taxon>Epsilonproteobacteria</taxon>
        <taxon>Nautiliales</taxon>
        <taxon>Nautiliaceae</taxon>
        <taxon>Nautilia</taxon>
    </lineage>
</organism>
<feature type="chain" id="PRO_1000134387" description="Acyl-[acyl-carrier-protein]--UDP-N-acetylglucosamine O-acyltransferase">
    <location>
        <begin position="1"/>
        <end position="259"/>
    </location>
</feature>
<keyword id="KW-0012">Acyltransferase</keyword>
<keyword id="KW-0963">Cytoplasm</keyword>
<keyword id="KW-0441">Lipid A biosynthesis</keyword>
<keyword id="KW-0444">Lipid biosynthesis</keyword>
<keyword id="KW-0443">Lipid metabolism</keyword>
<keyword id="KW-0677">Repeat</keyword>
<keyword id="KW-0808">Transferase</keyword>